<dbReference type="EC" id="1.1.5.3"/>
<dbReference type="EMBL" id="LT708304">
    <property type="protein sequence ID" value="SIU01959.1"/>
    <property type="molecule type" value="Genomic_DNA"/>
</dbReference>
<dbReference type="RefSeq" id="NP_856975.1">
    <property type="nucleotide sequence ID" value="NC_002945.3"/>
</dbReference>
<dbReference type="RefSeq" id="WP_003417217.1">
    <property type="nucleotide sequence ID" value="NC_002945.4"/>
</dbReference>
<dbReference type="SMR" id="P64185"/>
<dbReference type="KEGG" id="mbo:BQ2027_MB3330C"/>
<dbReference type="PATRIC" id="fig|233413.5.peg.3660"/>
<dbReference type="Proteomes" id="UP000001419">
    <property type="component" value="Chromosome"/>
</dbReference>
<dbReference type="GO" id="GO:0005737">
    <property type="term" value="C:cytoplasm"/>
    <property type="evidence" value="ECO:0007669"/>
    <property type="project" value="UniProtKB-SubCell"/>
</dbReference>
<dbReference type="GO" id="GO:0004368">
    <property type="term" value="F:glycerol-3-phosphate dehydrogenase (quinone) activity"/>
    <property type="evidence" value="ECO:0007669"/>
    <property type="project" value="UniProtKB-EC"/>
</dbReference>
<dbReference type="GO" id="GO:0006071">
    <property type="term" value="P:glycerol metabolic process"/>
    <property type="evidence" value="ECO:0007669"/>
    <property type="project" value="UniProtKB-KW"/>
</dbReference>
<dbReference type="GO" id="GO:0046168">
    <property type="term" value="P:glycerol-3-phosphate catabolic process"/>
    <property type="evidence" value="ECO:0007669"/>
    <property type="project" value="TreeGrafter"/>
</dbReference>
<dbReference type="FunFam" id="1.10.8.870:FF:000003">
    <property type="entry name" value="Glycerol-3-phosphate dehydrogenase"/>
    <property type="match status" value="1"/>
</dbReference>
<dbReference type="Gene3D" id="1.10.8.870">
    <property type="entry name" value="Alpha-glycerophosphate oxidase, cap domain"/>
    <property type="match status" value="1"/>
</dbReference>
<dbReference type="Gene3D" id="3.30.9.10">
    <property type="entry name" value="D-Amino Acid Oxidase, subunit A, domain 2"/>
    <property type="match status" value="1"/>
</dbReference>
<dbReference type="Gene3D" id="3.50.50.60">
    <property type="entry name" value="FAD/NAD(P)-binding domain"/>
    <property type="match status" value="1"/>
</dbReference>
<dbReference type="InterPro" id="IPR031656">
    <property type="entry name" value="DAO_C"/>
</dbReference>
<dbReference type="InterPro" id="IPR038299">
    <property type="entry name" value="DAO_C_sf"/>
</dbReference>
<dbReference type="InterPro" id="IPR006076">
    <property type="entry name" value="FAD-dep_OxRdtase"/>
</dbReference>
<dbReference type="InterPro" id="IPR036188">
    <property type="entry name" value="FAD/NAD-bd_sf"/>
</dbReference>
<dbReference type="InterPro" id="IPR000447">
    <property type="entry name" value="G3P_DH_FAD-dep"/>
</dbReference>
<dbReference type="PANTHER" id="PTHR11985">
    <property type="entry name" value="GLYCEROL-3-PHOSPHATE DEHYDROGENASE"/>
    <property type="match status" value="1"/>
</dbReference>
<dbReference type="PANTHER" id="PTHR11985:SF31">
    <property type="entry name" value="GLYCEROL-3-PHOSPHATE DEHYDROGENASE 2"/>
    <property type="match status" value="1"/>
</dbReference>
<dbReference type="Pfam" id="PF01266">
    <property type="entry name" value="DAO"/>
    <property type="match status" value="1"/>
</dbReference>
<dbReference type="Pfam" id="PF16901">
    <property type="entry name" value="DAO_C"/>
    <property type="match status" value="1"/>
</dbReference>
<dbReference type="PRINTS" id="PR01001">
    <property type="entry name" value="FADG3PDH"/>
</dbReference>
<dbReference type="SUPFAM" id="SSF51905">
    <property type="entry name" value="FAD/NAD(P)-binding domain"/>
    <property type="match status" value="1"/>
</dbReference>
<dbReference type="PROSITE" id="PS00977">
    <property type="entry name" value="FAD_G3PDH_1"/>
    <property type="match status" value="1"/>
</dbReference>
<dbReference type="PROSITE" id="PS00978">
    <property type="entry name" value="FAD_G3PDH_2"/>
    <property type="match status" value="1"/>
</dbReference>
<keyword id="KW-0963">Cytoplasm</keyword>
<keyword id="KW-0274">FAD</keyword>
<keyword id="KW-0285">Flavoprotein</keyword>
<keyword id="KW-0319">Glycerol metabolism</keyword>
<keyword id="KW-0560">Oxidoreductase</keyword>
<keyword id="KW-1185">Reference proteome</keyword>
<protein>
    <recommendedName>
        <fullName>Glycerol-3-phosphate dehydrogenase 2</fullName>
        <ecNumber>1.1.5.3</ecNumber>
    </recommendedName>
</protein>
<sequence length="585" mass="62778">MSNPIQAPDGGQGWPAAALGPAQRAVAWKRLGTEQFDVVVIGGGVVGSGCALDAATRGLKVALVEARDLASGTSSRSSKMFHGGLRYLEQLEFGLVREALYERELSLTTLAPHLVKPLPFLFPLTKRWWERPYIAAGIFLYDRLGGAKSVPAQRHFTRAGALRLSPGLKRSSLIGGIRYYDTVVDDARHTMTVARTAAHYGAVVRCSTQVVALLREGDRVIGVGVRDSENGAVAEVRGHVVVNATGVWTDEIQALSKQRGRFQVRASKGVHVVVPRDRIVSDVAMILRTEKSVMFVIPWGSHWIIGTTDTDWNLDLAHPAATKADIDYILGTVNAVLATPLTHADIDGVYAGLRPLLAGESDDTSKLSREHAVAVPAAGLVAIAGGKYTTYRVMAADAIDAAVQFIPARVAPSITEKVSLLGADGYFALVNQAEHVGALQGLHPYRVRHLLDRYGSLISDVLAMAASDPSLLSPITEAPGYLKVEAAYAAAAEGALHLEDILARRMRISIEYPHRGVDCAREVAEVVAPVLGWTAADIDREVANYMARVEAEVLSQAQPDDVSADMLRASAPEARAEILEPVPLD</sequence>
<evidence type="ECO:0000250" key="1"/>
<evidence type="ECO:0000305" key="2"/>
<organism>
    <name type="scientific">Mycobacterium bovis (strain ATCC BAA-935 / AF2122/97)</name>
    <dbReference type="NCBI Taxonomy" id="233413"/>
    <lineage>
        <taxon>Bacteria</taxon>
        <taxon>Bacillati</taxon>
        <taxon>Actinomycetota</taxon>
        <taxon>Actinomycetes</taxon>
        <taxon>Mycobacteriales</taxon>
        <taxon>Mycobacteriaceae</taxon>
        <taxon>Mycobacterium</taxon>
        <taxon>Mycobacterium tuberculosis complex</taxon>
    </lineage>
</organism>
<proteinExistence type="inferred from homology"/>
<name>GLPD2_MYCBO</name>
<comment type="catalytic activity">
    <reaction>
        <text>a quinone + sn-glycerol 3-phosphate = dihydroxyacetone phosphate + a quinol</text>
        <dbReference type="Rhea" id="RHEA:18977"/>
        <dbReference type="ChEBI" id="CHEBI:24646"/>
        <dbReference type="ChEBI" id="CHEBI:57597"/>
        <dbReference type="ChEBI" id="CHEBI:57642"/>
        <dbReference type="ChEBI" id="CHEBI:132124"/>
        <dbReference type="EC" id="1.1.5.3"/>
    </reaction>
</comment>
<comment type="cofactor">
    <cofactor evidence="1">
        <name>FAD</name>
        <dbReference type="ChEBI" id="CHEBI:57692"/>
    </cofactor>
</comment>
<comment type="subcellular location">
    <subcellularLocation>
        <location evidence="1">Cytoplasm</location>
    </subcellularLocation>
</comment>
<comment type="similarity">
    <text evidence="2">Belongs to the FAD-dependent glycerol-3-phosphate dehydrogenase family.</text>
</comment>
<gene>
    <name type="primary">glpD2</name>
    <name type="ordered locus">BQ2027_MB3330C</name>
</gene>
<accession>P64185</accession>
<accession>A0A1R3Y3R5</accession>
<accession>O07168</accession>
<accession>X2BMT2</accession>
<feature type="chain" id="PRO_0000126103" description="Glycerol-3-phosphate dehydrogenase 2">
    <location>
        <begin position="1"/>
        <end position="585"/>
    </location>
</feature>
<feature type="binding site" evidence="1">
    <location>
        <begin position="37"/>
        <end position="65"/>
    </location>
    <ligand>
        <name>FAD</name>
        <dbReference type="ChEBI" id="CHEBI:57692"/>
    </ligand>
</feature>
<reference key="1">
    <citation type="journal article" date="2003" name="Proc. Natl. Acad. Sci. U.S.A.">
        <title>The complete genome sequence of Mycobacterium bovis.</title>
        <authorList>
            <person name="Garnier T."/>
            <person name="Eiglmeier K."/>
            <person name="Camus J.-C."/>
            <person name="Medina N."/>
            <person name="Mansoor H."/>
            <person name="Pryor M."/>
            <person name="Duthoy S."/>
            <person name="Grondin S."/>
            <person name="Lacroix C."/>
            <person name="Monsempe C."/>
            <person name="Simon S."/>
            <person name="Harris B."/>
            <person name="Atkin R."/>
            <person name="Doggett J."/>
            <person name="Mayes R."/>
            <person name="Keating L."/>
            <person name="Wheeler P.R."/>
            <person name="Parkhill J."/>
            <person name="Barrell B.G."/>
            <person name="Cole S.T."/>
            <person name="Gordon S.V."/>
            <person name="Hewinson R.G."/>
        </authorList>
    </citation>
    <scope>NUCLEOTIDE SEQUENCE [LARGE SCALE GENOMIC DNA]</scope>
    <source>
        <strain>ATCC BAA-935 / AF2122/97</strain>
    </source>
</reference>
<reference key="2">
    <citation type="journal article" date="2017" name="Genome Announc.">
        <title>Updated reference genome sequence and annotation of Mycobacterium bovis AF2122/97.</title>
        <authorList>
            <person name="Malone K.M."/>
            <person name="Farrell D."/>
            <person name="Stuber T.P."/>
            <person name="Schubert O.T."/>
            <person name="Aebersold R."/>
            <person name="Robbe-Austerman S."/>
            <person name="Gordon S.V."/>
        </authorList>
    </citation>
    <scope>NUCLEOTIDE SEQUENCE [LARGE SCALE GENOMIC DNA]</scope>
    <scope>GENOME REANNOTATION</scope>
    <source>
        <strain>ATCC BAA-935 / AF2122/97</strain>
    </source>
</reference>